<comment type="similarity">
    <text evidence="1">Belongs to the UPF0145 family.</text>
</comment>
<name>Y542_ACTP7</name>
<organism>
    <name type="scientific">Actinobacillus pleuropneumoniae serotype 7 (strain AP76)</name>
    <dbReference type="NCBI Taxonomy" id="537457"/>
    <lineage>
        <taxon>Bacteria</taxon>
        <taxon>Pseudomonadati</taxon>
        <taxon>Pseudomonadota</taxon>
        <taxon>Gammaproteobacteria</taxon>
        <taxon>Pasteurellales</taxon>
        <taxon>Pasteurellaceae</taxon>
        <taxon>Actinobacillus</taxon>
    </lineage>
</organism>
<gene>
    <name type="ordered locus">APP7_0542</name>
</gene>
<protein>
    <recommendedName>
        <fullName evidence="1">UPF0145 protein APP7_0542</fullName>
    </recommendedName>
</protein>
<sequence>MIITTTPTIDGHQITEYKGLVFGEVVSGANFIRDFFASITDVIGGRSGAYESKLNSARQEALAELEKEAKRVGANALVGVSMEYQSMGGDKGMFIVVATGTAVVIR</sequence>
<feature type="chain" id="PRO_1000119976" description="UPF0145 protein APP7_0542">
    <location>
        <begin position="1"/>
        <end position="106"/>
    </location>
</feature>
<proteinExistence type="inferred from homology"/>
<evidence type="ECO:0000255" key="1">
    <source>
        <dbReference type="HAMAP-Rule" id="MF_00338"/>
    </source>
</evidence>
<accession>B3GX42</accession>
<dbReference type="EMBL" id="CP001091">
    <property type="protein sequence ID" value="ACE61194.1"/>
    <property type="molecule type" value="Genomic_DNA"/>
</dbReference>
<dbReference type="RefSeq" id="WP_005596594.1">
    <property type="nucleotide sequence ID" value="NC_010939.1"/>
</dbReference>
<dbReference type="SMR" id="B3GX42"/>
<dbReference type="GeneID" id="48598636"/>
<dbReference type="KEGG" id="apa:APP7_0542"/>
<dbReference type="HOGENOM" id="CLU_117144_3_2_6"/>
<dbReference type="Proteomes" id="UP000001226">
    <property type="component" value="Chromosome"/>
</dbReference>
<dbReference type="Gene3D" id="3.30.110.70">
    <property type="entry name" value="Hypothetical protein apc22750. Chain B"/>
    <property type="match status" value="1"/>
</dbReference>
<dbReference type="HAMAP" id="MF_00338">
    <property type="entry name" value="UPF0145"/>
    <property type="match status" value="1"/>
</dbReference>
<dbReference type="InterPro" id="IPR035439">
    <property type="entry name" value="UPF0145_dom_sf"/>
</dbReference>
<dbReference type="InterPro" id="IPR002765">
    <property type="entry name" value="UPF0145_YbjQ-like"/>
</dbReference>
<dbReference type="PANTHER" id="PTHR34068">
    <property type="entry name" value="UPF0145 PROTEIN YBJQ"/>
    <property type="match status" value="1"/>
</dbReference>
<dbReference type="PANTHER" id="PTHR34068:SF1">
    <property type="entry name" value="UPF0145 PROTEIN YBJQ"/>
    <property type="match status" value="1"/>
</dbReference>
<dbReference type="Pfam" id="PF01906">
    <property type="entry name" value="YbjQ_1"/>
    <property type="match status" value="1"/>
</dbReference>
<dbReference type="SUPFAM" id="SSF117782">
    <property type="entry name" value="YbjQ-like"/>
    <property type="match status" value="1"/>
</dbReference>
<reference key="1">
    <citation type="submission" date="2008-06" db="EMBL/GenBank/DDBJ databases">
        <title>Genome and proteome analysis of A. pleuropneumoniae serotype 7.</title>
        <authorList>
            <person name="Linke B."/>
            <person name="Buettner F."/>
            <person name="Martinez-Arias R."/>
            <person name="Goesmann A."/>
            <person name="Baltes N."/>
            <person name="Tegetmeyer H."/>
            <person name="Singh M."/>
            <person name="Gerlach G.F."/>
        </authorList>
    </citation>
    <scope>NUCLEOTIDE SEQUENCE [LARGE SCALE GENOMIC DNA]</scope>
    <source>
        <strain>AP76</strain>
    </source>
</reference>